<keyword id="KW-0963">Cytoplasm</keyword>
<keyword id="KW-0238">DNA-binding</keyword>
<keyword id="KW-1185">Reference proteome</keyword>
<keyword id="KW-0678">Repressor</keyword>
<keyword id="KW-0804">Transcription</keyword>
<keyword id="KW-0805">Transcription regulation</keyword>
<feature type="chain" id="PRO_0000054377" description="HTH-type transcriptional regulator PecS">
    <location>
        <begin position="1"/>
        <end position="166"/>
    </location>
</feature>
<feature type="domain" description="HTH marR-type" evidence="1">
    <location>
        <begin position="25"/>
        <end position="160"/>
    </location>
</feature>
<feature type="sequence conflict" description="In Ref. 1; CAA52427." evidence="6" ref="1">
    <original>I</original>
    <variation>Y</variation>
    <location>
        <position position="72"/>
    </location>
</feature>
<evidence type="ECO:0000255" key="1">
    <source>
        <dbReference type="PROSITE-ProRule" id="PRU00345"/>
    </source>
</evidence>
<evidence type="ECO:0000269" key="2">
    <source>
    </source>
</evidence>
<evidence type="ECO:0000269" key="3">
    <source>
    </source>
</evidence>
<evidence type="ECO:0000269" key="4">
    <source>
    </source>
</evidence>
<evidence type="ECO:0000303" key="5">
    <source>
    </source>
</evidence>
<evidence type="ECO:0000305" key="6"/>
<evidence type="ECO:0000305" key="7">
    <source>
    </source>
</evidence>
<evidence type="ECO:0000312" key="8">
    <source>
        <dbReference type="EMBL" id="ADN00620.1"/>
    </source>
</evidence>
<evidence type="ECO:0000312" key="9">
    <source>
        <dbReference type="EMBL" id="CAA52427.1"/>
    </source>
</evidence>
<reference evidence="9" key="1">
    <citation type="journal article" date="1994" name="Mol. Microbiol.">
        <title>pecS: a locus controlling pectinase, cellulase and blue pigment production in Erwinia chrysanthemi.</title>
        <authorList>
            <person name="Reverchon S."/>
            <person name="Nasser W."/>
            <person name="Robert-Baudouy J."/>
        </authorList>
    </citation>
    <scope>NUCLEOTIDE SEQUENCE [GENOMIC DNA]</scope>
    <scope>FUNCTION</scope>
    <scope>DISRUPTION PHENOTYPE</scope>
    <source>
        <strain>3937</strain>
    </source>
</reference>
<reference evidence="8" key="2">
    <citation type="journal article" date="2011" name="J. Bacteriol.">
        <title>Genome sequence of the plant-pathogenic bacterium Dickeya dadantii 3937.</title>
        <authorList>
            <person name="Glasner J.D."/>
            <person name="Yang C.H."/>
            <person name="Reverchon S."/>
            <person name="Hugouvieux-Cotte-Pattat N."/>
            <person name="Condemine G."/>
            <person name="Bohin J.P."/>
            <person name="Van Gijsegem F."/>
            <person name="Yang S."/>
            <person name="Franza T."/>
            <person name="Expert D."/>
            <person name="Plunkett G. III"/>
            <person name="San Francisco M.J."/>
            <person name="Charkowski A.O."/>
            <person name="Py B."/>
            <person name="Bell K."/>
            <person name="Rauscher L."/>
            <person name="Rodriguez-Palenzuela P."/>
            <person name="Toussaint A."/>
            <person name="Holeva M.C."/>
            <person name="He S.Y."/>
            <person name="Douet V."/>
            <person name="Boccara M."/>
            <person name="Blanco C."/>
            <person name="Toth I."/>
            <person name="Anderson B.D."/>
            <person name="Biehl B.S."/>
            <person name="Mau B."/>
            <person name="Flynn S.M."/>
            <person name="Barras F."/>
            <person name="Lindeberg M."/>
            <person name="Birch P.R."/>
            <person name="Tsuyumu S."/>
            <person name="Shi X."/>
            <person name="Hibbing M."/>
            <person name="Yap M.N."/>
            <person name="Carpentier M."/>
            <person name="Dassa E."/>
            <person name="Umehara M."/>
            <person name="Kim J.F."/>
            <person name="Rusch M."/>
            <person name="Soni P."/>
            <person name="Mayhew G.F."/>
            <person name="Fouts D.E."/>
            <person name="Gill S.R."/>
            <person name="Blattner F.R."/>
            <person name="Keen N.T."/>
            <person name="Perna N.T."/>
        </authorList>
    </citation>
    <scope>NUCLEOTIDE SEQUENCE [LARGE SCALE GENOMIC DNA]</scope>
    <source>
        <strain>3937</strain>
    </source>
</reference>
<reference key="3">
    <citation type="journal article" date="1997" name="Mol. Microbiol.">
        <title>Mutual control of the PecS/PecM couple, two proteins regulating virulence-factor synthesis in Erwinia chrysanthemi.</title>
        <authorList>
            <person name="Praillet T."/>
            <person name="Reverchon S."/>
            <person name="Nasser W."/>
        </authorList>
    </citation>
    <scope>FUNCTION</scope>
    <scope>DNA-BINDING</scope>
    <scope>ACTIVITY REGULATION</scope>
    <scope>TRANSCRIPTIONAL REGULATION</scope>
</reference>
<reference key="4">
    <citation type="journal article" date="2002" name="J. Bacteriol.">
        <title>Characterization of indigoidine biosynthetic genes in Erwinia chrysanthemi and role of this blue pigment in pathogenicity.</title>
        <authorList>
            <person name="Reverchon S."/>
            <person name="Rouanet C."/>
            <person name="Expert D."/>
            <person name="Nasser W."/>
        </authorList>
    </citation>
    <scope>FUNCTION</scope>
    <scope>DNA-BINDING</scope>
    <scope>DISRUPTION PHENOTYPE</scope>
    <source>
        <strain>3937</strain>
    </source>
</reference>
<dbReference type="EMBL" id="X74409">
    <property type="protein sequence ID" value="CAA52427.1"/>
    <property type="molecule type" value="Genomic_DNA"/>
</dbReference>
<dbReference type="EMBL" id="CP002038">
    <property type="protein sequence ID" value="ADN00620.1"/>
    <property type="molecule type" value="Genomic_DNA"/>
</dbReference>
<dbReference type="PIR" id="S35973">
    <property type="entry name" value="S35973"/>
</dbReference>
<dbReference type="RefSeq" id="WP_013320015.1">
    <property type="nucleotide sequence ID" value="NC_014500.1"/>
</dbReference>
<dbReference type="SMR" id="P42195"/>
<dbReference type="STRING" id="198628.Dda3937_00976"/>
<dbReference type="KEGG" id="ddd:Dda3937_00976"/>
<dbReference type="PATRIC" id="fig|198628.6.peg.4371"/>
<dbReference type="eggNOG" id="COG1846">
    <property type="taxonomic scope" value="Bacteria"/>
</dbReference>
<dbReference type="HOGENOM" id="CLU_083287_27_5_6"/>
<dbReference type="OrthoDB" id="32523at2"/>
<dbReference type="Proteomes" id="UP000006859">
    <property type="component" value="Chromosome"/>
</dbReference>
<dbReference type="GO" id="GO:0005737">
    <property type="term" value="C:cytoplasm"/>
    <property type="evidence" value="ECO:0007669"/>
    <property type="project" value="UniProtKB-SubCell"/>
</dbReference>
<dbReference type="GO" id="GO:0000987">
    <property type="term" value="F:cis-regulatory region sequence-specific DNA binding"/>
    <property type="evidence" value="ECO:0000314"/>
    <property type="project" value="GO_Central"/>
</dbReference>
<dbReference type="GO" id="GO:0003700">
    <property type="term" value="F:DNA-binding transcription factor activity"/>
    <property type="evidence" value="ECO:0007669"/>
    <property type="project" value="InterPro"/>
</dbReference>
<dbReference type="GO" id="GO:0006355">
    <property type="term" value="P:regulation of DNA-templated transcription"/>
    <property type="evidence" value="ECO:0000315"/>
    <property type="project" value="ASAP"/>
</dbReference>
<dbReference type="Gene3D" id="1.10.10.10">
    <property type="entry name" value="Winged helix-like DNA-binding domain superfamily/Winged helix DNA-binding domain"/>
    <property type="match status" value="1"/>
</dbReference>
<dbReference type="InterPro" id="IPR000835">
    <property type="entry name" value="HTH_MarR-typ"/>
</dbReference>
<dbReference type="InterPro" id="IPR023187">
    <property type="entry name" value="Tscrpt_reg_MarR-type_CS"/>
</dbReference>
<dbReference type="InterPro" id="IPR036388">
    <property type="entry name" value="WH-like_DNA-bd_sf"/>
</dbReference>
<dbReference type="InterPro" id="IPR036390">
    <property type="entry name" value="WH_DNA-bd_sf"/>
</dbReference>
<dbReference type="PANTHER" id="PTHR42756">
    <property type="entry name" value="TRANSCRIPTIONAL REGULATOR, MARR"/>
    <property type="match status" value="1"/>
</dbReference>
<dbReference type="PANTHER" id="PTHR42756:SF1">
    <property type="entry name" value="TRANSCRIPTIONAL REPRESSOR OF EMRAB OPERON"/>
    <property type="match status" value="1"/>
</dbReference>
<dbReference type="Pfam" id="PF01047">
    <property type="entry name" value="MarR"/>
    <property type="match status" value="1"/>
</dbReference>
<dbReference type="PRINTS" id="PR00598">
    <property type="entry name" value="HTHMARR"/>
</dbReference>
<dbReference type="SMART" id="SM00347">
    <property type="entry name" value="HTH_MARR"/>
    <property type="match status" value="1"/>
</dbReference>
<dbReference type="SUPFAM" id="SSF46785">
    <property type="entry name" value="Winged helix' DNA-binding domain"/>
    <property type="match status" value="1"/>
</dbReference>
<dbReference type="PROSITE" id="PS01117">
    <property type="entry name" value="HTH_MARR_1"/>
    <property type="match status" value="1"/>
</dbReference>
<dbReference type="PROSITE" id="PS50995">
    <property type="entry name" value="HTH_MARR_2"/>
    <property type="match status" value="1"/>
</dbReference>
<proteinExistence type="evidence at protein level"/>
<comment type="function">
    <text evidence="2 3 4">Negatively regulates the expression of genes encoding pectinase and cellulase, which play a major role in virulence, and the expression of the blue pigment indigoidine, which is implicated in pathogenicity and protection from oxidative stress (PubMed:11790734, PubMed:8022282). Represses the expression of genes involved in indigoidine biosynthesis by binding to indA and indC promoter regions (PubMed:11790734). Also binds to promoter sites in the pecS-pecM intergenic region and negatively autoregulates its expression as well as that of pecM (PubMed:9194707).</text>
</comment>
<comment type="activity regulation">
    <text evidence="4">The presence of PecM is required to ensure the full regulation of the pecS-pecM intergenic region by PecS.</text>
</comment>
<comment type="subcellular location">
    <subcellularLocation>
        <location evidence="7">Cytoplasm</location>
    </subcellularLocation>
</comment>
<comment type="induction">
    <text evidence="4">Negatively autoregulated.</text>
</comment>
<comment type="disruption phenotype">
    <text evidence="2 3">Mutants display derepressed synthesis of both pectinases and cellulases (PubMed:8022282). They also produce an insoluble extracellular blue pigment, indigoidine (PubMed:8022282). The survival of the mutant, in which indigoidine synthesis is derepressed, is significantly higher under oxidative stress (PubMed:11790734). Mutant is much more aggressive than the wild-type strain on potted S.ionantha (PubMed:11790734).</text>
</comment>
<name>PECS_DICD3</name>
<protein>
    <recommendedName>
        <fullName evidence="6">HTH-type transcriptional regulator PecS</fullName>
    </recommendedName>
</protein>
<gene>
    <name evidence="5" type="primary">pecS</name>
    <name evidence="8" type="ordered locus">Dda3937_00976</name>
</gene>
<accession>P42195</accession>
<accession>E0SMI1</accession>
<organism>
    <name type="scientific">Dickeya dadantii (strain 3937)</name>
    <name type="common">Erwinia chrysanthemi (strain 3937)</name>
    <dbReference type="NCBI Taxonomy" id="198628"/>
    <lineage>
        <taxon>Bacteria</taxon>
        <taxon>Pseudomonadati</taxon>
        <taxon>Pseudomonadota</taxon>
        <taxon>Gammaproteobacteria</taxon>
        <taxon>Enterobacterales</taxon>
        <taxon>Pectobacteriaceae</taxon>
        <taxon>Dickeya</taxon>
    </lineage>
</organism>
<sequence>MARYLEVSDIVQQWRNERPDLDVEPMLVIGTLSRVSLLIDRALDKVFSKYKLSAREFDILATLRRRGAPYAISPSQIVNALMINNSTLTSRLDRLEQAGWLRRMPIEGDRRSVNIQLTDEGFALINRVVEEHVENERDILSPFSEEEKTHLRALLGRVEKHLVNNR</sequence>